<feature type="chain" id="PRO_0000291134" description="UPF0434 protein PFL_1779">
    <location>
        <begin position="1"/>
        <end position="61"/>
    </location>
</feature>
<feature type="helix" evidence="2">
    <location>
        <begin position="5"/>
        <end position="7"/>
    </location>
</feature>
<feature type="turn" evidence="2">
    <location>
        <begin position="12"/>
        <end position="14"/>
    </location>
</feature>
<feature type="strand" evidence="2">
    <location>
        <begin position="24"/>
        <end position="29"/>
    </location>
</feature>
<feature type="turn" evidence="2">
    <location>
        <begin position="30"/>
        <end position="33"/>
    </location>
</feature>
<feature type="strand" evidence="2">
    <location>
        <begin position="34"/>
        <end position="39"/>
    </location>
</feature>
<feature type="helix" evidence="2">
    <location>
        <begin position="47"/>
        <end position="49"/>
    </location>
</feature>
<feature type="helix" evidence="2">
    <location>
        <begin position="55"/>
        <end position="58"/>
    </location>
</feature>
<sequence>MDTKLLDILACPICKGPLKLSADKTELISKGAGLAYPIRDGIPVMLESEARTLTTEERLDK</sequence>
<proteinExistence type="evidence at protein level"/>
<organism>
    <name type="scientific">Pseudomonas fluorescens (strain ATCC BAA-477 / NRRL B-23932 / Pf-5)</name>
    <dbReference type="NCBI Taxonomy" id="220664"/>
    <lineage>
        <taxon>Bacteria</taxon>
        <taxon>Pseudomonadati</taxon>
        <taxon>Pseudomonadota</taxon>
        <taxon>Gammaproteobacteria</taxon>
        <taxon>Pseudomonadales</taxon>
        <taxon>Pseudomonadaceae</taxon>
        <taxon>Pseudomonas</taxon>
    </lineage>
</organism>
<reference key="1">
    <citation type="journal article" date="2005" name="Nat. Biotechnol.">
        <title>Complete genome sequence of the plant commensal Pseudomonas fluorescens Pf-5.</title>
        <authorList>
            <person name="Paulsen I.T."/>
            <person name="Press C.M."/>
            <person name="Ravel J."/>
            <person name="Kobayashi D.Y."/>
            <person name="Myers G.S.A."/>
            <person name="Mavrodi D.V."/>
            <person name="DeBoy R.T."/>
            <person name="Seshadri R."/>
            <person name="Ren Q."/>
            <person name="Madupu R."/>
            <person name="Dodson R.J."/>
            <person name="Durkin A.S."/>
            <person name="Brinkac L.M."/>
            <person name="Daugherty S.C."/>
            <person name="Sullivan S.A."/>
            <person name="Rosovitz M.J."/>
            <person name="Gwinn M.L."/>
            <person name="Zhou L."/>
            <person name="Schneider D.J."/>
            <person name="Cartinhour S.W."/>
            <person name="Nelson W.C."/>
            <person name="Weidman J."/>
            <person name="Watkins K."/>
            <person name="Tran K."/>
            <person name="Khouri H."/>
            <person name="Pierson E.A."/>
            <person name="Pierson L.S. III"/>
            <person name="Thomashow L.S."/>
            <person name="Loper J.E."/>
        </authorList>
    </citation>
    <scope>NUCLEOTIDE SEQUENCE [LARGE SCALE GENOMIC DNA]</scope>
    <source>
        <strain>ATCC BAA-477 / NRRL B-23932 / Pf-5</strain>
    </source>
</reference>
<gene>
    <name type="ordered locus">PFL_1779</name>
</gene>
<name>Y1779_PSEF5</name>
<comment type="similarity">
    <text evidence="1">Belongs to the UPF0434 family.</text>
</comment>
<evidence type="ECO:0000255" key="1">
    <source>
        <dbReference type="HAMAP-Rule" id="MF_01187"/>
    </source>
</evidence>
<evidence type="ECO:0007829" key="2">
    <source>
        <dbReference type="PDB" id="2PK7"/>
    </source>
</evidence>
<protein>
    <recommendedName>
        <fullName evidence="1">UPF0434 protein PFL_1779</fullName>
    </recommendedName>
</protein>
<dbReference type="EMBL" id="CP000076">
    <property type="protein sequence ID" value="AAY91068.1"/>
    <property type="molecule type" value="Genomic_DNA"/>
</dbReference>
<dbReference type="RefSeq" id="WP_011060103.1">
    <property type="nucleotide sequence ID" value="NC_004129.6"/>
</dbReference>
<dbReference type="PDB" id="2PK7">
    <property type="method" value="X-ray"/>
    <property type="resolution" value="2.20 A"/>
    <property type="chains" value="A/B=1-61"/>
</dbReference>
<dbReference type="PDBsum" id="2PK7"/>
<dbReference type="SMR" id="Q4KFT4"/>
<dbReference type="STRING" id="220664.PFL_1779"/>
<dbReference type="DNASU" id="3477549"/>
<dbReference type="KEGG" id="pfl:PFL_1779"/>
<dbReference type="eggNOG" id="COG2835">
    <property type="taxonomic scope" value="Bacteria"/>
</dbReference>
<dbReference type="HOGENOM" id="CLU_155659_3_1_6"/>
<dbReference type="EvolutionaryTrace" id="Q4KFT4"/>
<dbReference type="Proteomes" id="UP000008540">
    <property type="component" value="Chromosome"/>
</dbReference>
<dbReference type="GO" id="GO:0005829">
    <property type="term" value="C:cytosol"/>
    <property type="evidence" value="ECO:0007669"/>
    <property type="project" value="TreeGrafter"/>
</dbReference>
<dbReference type="FunFam" id="2.20.25.10:FF:000002">
    <property type="entry name" value="UPF0434 protein YcaR"/>
    <property type="match status" value="1"/>
</dbReference>
<dbReference type="Gene3D" id="2.20.25.10">
    <property type="match status" value="1"/>
</dbReference>
<dbReference type="HAMAP" id="MF_01187">
    <property type="entry name" value="UPF0434"/>
    <property type="match status" value="1"/>
</dbReference>
<dbReference type="InterPro" id="IPR005651">
    <property type="entry name" value="Trm112-like"/>
</dbReference>
<dbReference type="PANTHER" id="PTHR33505:SF4">
    <property type="entry name" value="PROTEIN PREY, MITOCHONDRIAL"/>
    <property type="match status" value="1"/>
</dbReference>
<dbReference type="PANTHER" id="PTHR33505">
    <property type="entry name" value="ZGC:162634"/>
    <property type="match status" value="1"/>
</dbReference>
<dbReference type="Pfam" id="PF03966">
    <property type="entry name" value="Trm112p"/>
    <property type="match status" value="1"/>
</dbReference>
<dbReference type="SUPFAM" id="SSF158997">
    <property type="entry name" value="Trm112p-like"/>
    <property type="match status" value="1"/>
</dbReference>
<keyword id="KW-0002">3D-structure</keyword>
<accession>Q4KFT4</accession>